<feature type="chain" id="PRO_0000087651" description="U1-theraphotoxin-Lp1b">
    <location>
        <begin position="1"/>
        <end position="49"/>
    </location>
</feature>
<feature type="disulfide bond" evidence="1">
    <location>
        <begin position="4"/>
        <end position="17"/>
    </location>
</feature>
<feature type="disulfide bond" evidence="1">
    <location>
        <begin position="8"/>
        <end position="41"/>
    </location>
</feature>
<feature type="disulfide bond" evidence="6">
    <location>
        <begin position="22"/>
        <end position="24"/>
    </location>
</feature>
<feature type="disulfide bond" evidence="1">
    <location>
        <begin position="35"/>
        <end position="46"/>
    </location>
</feature>
<accession>P61506</accession>
<organism>
    <name type="scientific">Lasiodora parahybana</name>
    <name type="common">Brazilian salmon pink birdeater</name>
    <name type="synonym">Brazilian salmon pink tarantula</name>
    <dbReference type="NCBI Taxonomy" id="268490"/>
    <lineage>
        <taxon>Eukaryota</taxon>
        <taxon>Metazoa</taxon>
        <taxon>Ecdysozoa</taxon>
        <taxon>Arthropoda</taxon>
        <taxon>Chelicerata</taxon>
        <taxon>Arachnida</taxon>
        <taxon>Araneae</taxon>
        <taxon>Mygalomorphae</taxon>
        <taxon>Theraphosidae</taxon>
        <taxon>Lasiodora</taxon>
    </lineage>
</organism>
<protein>
    <recommendedName>
        <fullName>U1-theraphotoxin-Lp1b</fullName>
        <shortName>U1-TRTX-Lp1b</shortName>
    </recommendedName>
    <alternativeName>
        <fullName evidence="4">Lasiotoxin-2</fullName>
        <shortName evidence="4">LpTX2</shortName>
    </alternativeName>
</protein>
<keyword id="KW-0903">Direct protein sequencing</keyword>
<keyword id="KW-1015">Disulfide bond</keyword>
<keyword id="KW-0528">Neurotoxin</keyword>
<keyword id="KW-0964">Secreted</keyword>
<keyword id="KW-0800">Toxin</keyword>
<evidence type="ECO:0000250" key="1"/>
<evidence type="ECO:0000250" key="2">
    <source>
        <dbReference type="UniProtKB" id="P0DRD8"/>
    </source>
</evidence>
<evidence type="ECO:0000269" key="3">
    <source ref="1"/>
</evidence>
<evidence type="ECO:0000303" key="4">
    <source ref="1"/>
</evidence>
<evidence type="ECO:0000305" key="5"/>
<evidence type="ECO:0000305" key="6">
    <source>
    </source>
</evidence>
<evidence type="ECO:0000305" key="7">
    <source ref="1"/>
</evidence>
<name>TXL2_LASPA</name>
<proteinExistence type="evidence at protein level"/>
<sequence length="49" mass="5683">FFECTLECDIKKEGKPCKPKGCKCNDKDNKDHKKCSGGWRCKLKLCLKF</sequence>
<reference key="1">
    <citation type="journal article" date="1997" name="Toxicon">
        <title>Two novel peptide neurotoxins from the venom of the tarantula Lasiodora parahybana.</title>
        <authorList>
            <person name="Escoubas P."/>
            <person name="Celerier M.-L."/>
            <person name="Romi-Lebrun R."/>
            <person name="Nakajima T."/>
        </authorList>
    </citation>
    <scope>PROTEIN SEQUENCE</scope>
    <scope>MASS SPECTROMETRY</scope>
    <scope>SUBCELLULAR LOCATION</scope>
    <source>
        <tissue>Venom</tissue>
    </source>
</reference>
<reference key="2">
    <citation type="journal article" date="2004" name="Toxicon">
        <title>Tarantulas: eight-legged pharmacists and combinatorial chemists.</title>
        <authorList>
            <person name="Escoubas P."/>
            <person name="Rash L."/>
        </authorList>
    </citation>
    <scope>REVIEW</scope>
    <scope>DISULFIDE BONDS</scope>
</reference>
<dbReference type="ArachnoServer" id="AS000357">
    <property type="toxin name" value="U1-theraphotoxin-Lp1b"/>
</dbReference>
<dbReference type="GO" id="GO:0005576">
    <property type="term" value="C:extracellular region"/>
    <property type="evidence" value="ECO:0007669"/>
    <property type="project" value="UniProtKB-SubCell"/>
</dbReference>
<dbReference type="GO" id="GO:0090729">
    <property type="term" value="F:toxin activity"/>
    <property type="evidence" value="ECO:0007669"/>
    <property type="project" value="UniProtKB-KW"/>
</dbReference>
<dbReference type="InterPro" id="IPR012625">
    <property type="entry name" value="Hwtx-2-like"/>
</dbReference>
<dbReference type="Pfam" id="PF08089">
    <property type="entry name" value="Toxin_20"/>
    <property type="match status" value="1"/>
</dbReference>
<dbReference type="SUPFAM" id="SSF57059">
    <property type="entry name" value="omega toxin-like"/>
    <property type="match status" value="1"/>
</dbReference>
<dbReference type="PROSITE" id="PS60022">
    <property type="entry name" value="HWTX_2"/>
    <property type="match status" value="1"/>
</dbReference>
<comment type="function">
    <text evidence="2">Toxin that causes irreversible contractile paralysis into adult Aedes aegypti resulting in 100% mortality after 24 hours.</text>
</comment>
<comment type="subcellular location">
    <subcellularLocation>
        <location evidence="3">Secreted</location>
    </subcellularLocation>
</comment>
<comment type="tissue specificity">
    <text evidence="7">Expressed by the venom gland.</text>
</comment>
<comment type="mass spectrometry" mass="5674.0" method="MALDI" evidence="3"/>
<comment type="similarity">
    <text evidence="5">Belongs to the neurotoxin 12 (Hwtx-2) family. 04 (lasiotoxin) subfamily.</text>
</comment>